<dbReference type="EMBL" id="CP000300">
    <property type="protein sequence ID" value="ABE51087.1"/>
    <property type="molecule type" value="Genomic_DNA"/>
</dbReference>
<dbReference type="RefSeq" id="WP_011498251.1">
    <property type="nucleotide sequence ID" value="NC_007955.1"/>
</dbReference>
<dbReference type="SMR" id="Q12ZN9"/>
<dbReference type="STRING" id="259564.Mbur_0066"/>
<dbReference type="GeneID" id="3997194"/>
<dbReference type="KEGG" id="mbu:Mbur_0066"/>
<dbReference type="HOGENOM" id="CLU_128576_0_0_2"/>
<dbReference type="OrthoDB" id="7000at2157"/>
<dbReference type="Proteomes" id="UP000001979">
    <property type="component" value="Chromosome"/>
</dbReference>
<dbReference type="GO" id="GO:0009347">
    <property type="term" value="C:aspartate carbamoyltransferase complex"/>
    <property type="evidence" value="ECO:0007669"/>
    <property type="project" value="InterPro"/>
</dbReference>
<dbReference type="GO" id="GO:0046872">
    <property type="term" value="F:metal ion binding"/>
    <property type="evidence" value="ECO:0007669"/>
    <property type="project" value="UniProtKB-KW"/>
</dbReference>
<dbReference type="GO" id="GO:0006207">
    <property type="term" value="P:'de novo' pyrimidine nucleobase biosynthetic process"/>
    <property type="evidence" value="ECO:0007669"/>
    <property type="project" value="InterPro"/>
</dbReference>
<dbReference type="GO" id="GO:0006221">
    <property type="term" value="P:pyrimidine nucleotide biosynthetic process"/>
    <property type="evidence" value="ECO:0007669"/>
    <property type="project" value="UniProtKB-UniRule"/>
</dbReference>
<dbReference type="Gene3D" id="2.30.30.20">
    <property type="entry name" value="Aspartate carbamoyltransferase regulatory subunit, C-terminal domain"/>
    <property type="match status" value="1"/>
</dbReference>
<dbReference type="Gene3D" id="3.30.70.140">
    <property type="entry name" value="Aspartate carbamoyltransferase regulatory subunit, N-terminal domain"/>
    <property type="match status" value="1"/>
</dbReference>
<dbReference type="HAMAP" id="MF_00002">
    <property type="entry name" value="Asp_carb_tr_reg"/>
    <property type="match status" value="1"/>
</dbReference>
<dbReference type="InterPro" id="IPR020545">
    <property type="entry name" value="Asp_carbamoyltransf_reg_N"/>
</dbReference>
<dbReference type="InterPro" id="IPR002801">
    <property type="entry name" value="Asp_carbamoylTrfase_reg"/>
</dbReference>
<dbReference type="InterPro" id="IPR020542">
    <property type="entry name" value="Asp_carbamoyltrfase_reg_C"/>
</dbReference>
<dbReference type="InterPro" id="IPR036792">
    <property type="entry name" value="Asp_carbatrfase_reg_C_sf"/>
</dbReference>
<dbReference type="InterPro" id="IPR036793">
    <property type="entry name" value="Asp_carbatrfase_reg_N_sf"/>
</dbReference>
<dbReference type="NCBIfam" id="TIGR00240">
    <property type="entry name" value="ATCase_reg"/>
    <property type="match status" value="1"/>
</dbReference>
<dbReference type="PANTHER" id="PTHR35805">
    <property type="entry name" value="ASPARTATE CARBAMOYLTRANSFERASE REGULATORY CHAIN"/>
    <property type="match status" value="1"/>
</dbReference>
<dbReference type="PANTHER" id="PTHR35805:SF1">
    <property type="entry name" value="ASPARTATE CARBAMOYLTRANSFERASE REGULATORY CHAIN"/>
    <property type="match status" value="1"/>
</dbReference>
<dbReference type="Pfam" id="PF01948">
    <property type="entry name" value="PyrI"/>
    <property type="match status" value="1"/>
</dbReference>
<dbReference type="Pfam" id="PF02748">
    <property type="entry name" value="PyrI_C"/>
    <property type="match status" value="1"/>
</dbReference>
<dbReference type="SUPFAM" id="SSF57825">
    <property type="entry name" value="Aspartate carbamoyltransferase, Regulatory-chain, C-terminal domain"/>
    <property type="match status" value="1"/>
</dbReference>
<dbReference type="SUPFAM" id="SSF54893">
    <property type="entry name" value="Aspartate carbamoyltransferase, Regulatory-chain, N-terminal domain"/>
    <property type="match status" value="1"/>
</dbReference>
<sequence length="159" mass="17562">MSSDDQHIREIRVHPIENGTVIDHINAGQALNVLKILNIPTSSSRVVSVLINAPSVHGRKDVVKIEGRELNVEEVDKIALIAPNATINIIRDFEVSDKDIVHIHSQIEGVVRCINPNCISNSNEPVTSKFAVSSNGQRTILRCSYCERIISDDIGEHLL</sequence>
<organism>
    <name type="scientific">Methanococcoides burtonii (strain DSM 6242 / NBRC 107633 / OCM 468 / ACE-M)</name>
    <dbReference type="NCBI Taxonomy" id="259564"/>
    <lineage>
        <taxon>Archaea</taxon>
        <taxon>Methanobacteriati</taxon>
        <taxon>Methanobacteriota</taxon>
        <taxon>Stenosarchaea group</taxon>
        <taxon>Methanomicrobia</taxon>
        <taxon>Methanosarcinales</taxon>
        <taxon>Methanosarcinaceae</taxon>
        <taxon>Methanococcoides</taxon>
    </lineage>
</organism>
<evidence type="ECO:0000255" key="1">
    <source>
        <dbReference type="HAMAP-Rule" id="MF_00002"/>
    </source>
</evidence>
<protein>
    <recommendedName>
        <fullName evidence="1">Aspartate carbamoyltransferase regulatory chain</fullName>
    </recommendedName>
</protein>
<comment type="function">
    <text evidence="1">Involved in allosteric regulation of aspartate carbamoyltransferase.</text>
</comment>
<comment type="cofactor">
    <cofactor evidence="1">
        <name>Zn(2+)</name>
        <dbReference type="ChEBI" id="CHEBI:29105"/>
    </cofactor>
    <text evidence="1">Binds 1 zinc ion per subunit.</text>
</comment>
<comment type="subunit">
    <text evidence="1">Contains catalytic and regulatory chains.</text>
</comment>
<comment type="similarity">
    <text evidence="1">Belongs to the PyrI family.</text>
</comment>
<feature type="chain" id="PRO_1000000037" description="Aspartate carbamoyltransferase regulatory chain">
    <location>
        <begin position="1"/>
        <end position="159"/>
    </location>
</feature>
<feature type="binding site" evidence="1">
    <location>
        <position position="113"/>
    </location>
    <ligand>
        <name>Zn(2+)</name>
        <dbReference type="ChEBI" id="CHEBI:29105"/>
    </ligand>
</feature>
<feature type="binding site" evidence="1">
    <location>
        <position position="118"/>
    </location>
    <ligand>
        <name>Zn(2+)</name>
        <dbReference type="ChEBI" id="CHEBI:29105"/>
    </ligand>
</feature>
<feature type="binding site" evidence="1">
    <location>
        <position position="143"/>
    </location>
    <ligand>
        <name>Zn(2+)</name>
        <dbReference type="ChEBI" id="CHEBI:29105"/>
    </ligand>
</feature>
<feature type="binding site" evidence="1">
    <location>
        <position position="146"/>
    </location>
    <ligand>
        <name>Zn(2+)</name>
        <dbReference type="ChEBI" id="CHEBI:29105"/>
    </ligand>
</feature>
<gene>
    <name evidence="1" type="primary">pyrI</name>
    <name type="ordered locus">Mbur_0066</name>
</gene>
<accession>Q12ZN9</accession>
<reference key="1">
    <citation type="journal article" date="2009" name="ISME J.">
        <title>The genome sequence of the psychrophilic archaeon, Methanococcoides burtonii: the role of genome evolution in cold adaptation.</title>
        <authorList>
            <person name="Allen M.A."/>
            <person name="Lauro F.M."/>
            <person name="Williams T.J."/>
            <person name="Burg D."/>
            <person name="Siddiqui K.S."/>
            <person name="De Francisci D."/>
            <person name="Chong K.W."/>
            <person name="Pilak O."/>
            <person name="Chew H.H."/>
            <person name="De Maere M.Z."/>
            <person name="Ting L."/>
            <person name="Katrib M."/>
            <person name="Ng C."/>
            <person name="Sowers K.R."/>
            <person name="Galperin M.Y."/>
            <person name="Anderson I.J."/>
            <person name="Ivanova N."/>
            <person name="Dalin E."/>
            <person name="Martinez M."/>
            <person name="Lapidus A."/>
            <person name="Hauser L."/>
            <person name="Land M."/>
            <person name="Thomas T."/>
            <person name="Cavicchioli R."/>
        </authorList>
    </citation>
    <scope>NUCLEOTIDE SEQUENCE [LARGE SCALE GENOMIC DNA]</scope>
    <source>
        <strain>DSM 6242 / NBRC 107633 / OCM 468 / ACE-M</strain>
    </source>
</reference>
<name>PYRI_METBU</name>
<proteinExistence type="inferred from homology"/>
<keyword id="KW-0479">Metal-binding</keyword>
<keyword id="KW-0665">Pyrimidine biosynthesis</keyword>
<keyword id="KW-0862">Zinc</keyword>